<organism>
    <name type="scientific">Danio rerio</name>
    <name type="common">Zebrafish</name>
    <name type="synonym">Brachydanio rerio</name>
    <dbReference type="NCBI Taxonomy" id="7955"/>
    <lineage>
        <taxon>Eukaryota</taxon>
        <taxon>Metazoa</taxon>
        <taxon>Chordata</taxon>
        <taxon>Craniata</taxon>
        <taxon>Vertebrata</taxon>
        <taxon>Euteleostomi</taxon>
        <taxon>Actinopterygii</taxon>
        <taxon>Neopterygii</taxon>
        <taxon>Teleostei</taxon>
        <taxon>Ostariophysi</taxon>
        <taxon>Cypriniformes</taxon>
        <taxon>Danionidae</taxon>
        <taxon>Danioninae</taxon>
        <taxon>Danio</taxon>
    </lineage>
</organism>
<evidence type="ECO:0000250" key="1"/>
<evidence type="ECO:0000250" key="2">
    <source>
        <dbReference type="UniProtKB" id="P23786"/>
    </source>
</evidence>
<evidence type="ECO:0000255" key="3"/>
<evidence type="ECO:0000305" key="4"/>
<proteinExistence type="evidence at transcript level"/>
<protein>
    <recommendedName>
        <fullName>Carnitine O-palmitoyltransferase 2, mitochondrial</fullName>
        <ecNumber>2.3.1.21</ecNumber>
    </recommendedName>
    <alternativeName>
        <fullName>Carnitine palmitoyltransferase II</fullName>
        <shortName>CPT II</shortName>
    </alternativeName>
</protein>
<feature type="transit peptide" description="Mitochondrion" evidence="3">
    <location>
        <begin position="1"/>
        <end position="36"/>
    </location>
</feature>
<feature type="chain" id="PRO_0000351546" description="Carnitine O-palmitoyltransferase 2, mitochondrial">
    <location>
        <begin position="37"/>
        <end position="669"/>
    </location>
</feature>
<feature type="topological domain" description="Mitochondrial matrix" evidence="1">
    <location>
        <begin position="37"/>
        <end position="190"/>
    </location>
</feature>
<feature type="intramembrane region" description="Note=Mitochondrial inner membrane" evidence="1">
    <location>
        <begin position="191"/>
        <end position="220"/>
    </location>
</feature>
<feature type="topological domain" description="Mitochondrial matrix" evidence="1">
    <location>
        <begin position="221"/>
        <end position="669"/>
    </location>
</feature>
<feature type="active site" description="Proton acceptor" evidence="1">
    <location>
        <position position="384"/>
    </location>
</feature>
<feature type="binding site" evidence="1">
    <location>
        <begin position="464"/>
        <end position="476"/>
    </location>
    <ligand>
        <name>CoA</name>
        <dbReference type="ChEBI" id="CHEBI:57287"/>
    </ligand>
</feature>
<feature type="binding site" evidence="1">
    <location>
        <position position="498"/>
    </location>
    <ligand>
        <name>(R)-carnitine</name>
        <dbReference type="ChEBI" id="CHEBI:16347"/>
    </ligand>
</feature>
<feature type="binding site" evidence="1">
    <location>
        <position position="500"/>
    </location>
    <ligand>
        <name>(R)-carnitine</name>
        <dbReference type="ChEBI" id="CHEBI:16347"/>
    </ligand>
</feature>
<feature type="binding site" evidence="1">
    <location>
        <position position="511"/>
    </location>
    <ligand>
        <name>(R)-carnitine</name>
        <dbReference type="ChEBI" id="CHEBI:16347"/>
    </ligand>
</feature>
<accession>Q5U3U3</accession>
<accession>B0S7W9</accession>
<gene>
    <name type="primary">cpt2</name>
    <name type="ORF">si:ch211-216k22.1</name>
    <name type="ORF">zgc:101627</name>
</gene>
<keyword id="KW-0012">Acyltransferase</keyword>
<keyword id="KW-0276">Fatty acid metabolism</keyword>
<keyword id="KW-0443">Lipid metabolism</keyword>
<keyword id="KW-0472">Membrane</keyword>
<keyword id="KW-0496">Mitochondrion</keyword>
<keyword id="KW-0999">Mitochondrion inner membrane</keyword>
<keyword id="KW-1185">Reference proteome</keyword>
<keyword id="KW-0808">Transferase</keyword>
<keyword id="KW-0809">Transit peptide</keyword>
<keyword id="KW-0813">Transport</keyword>
<sequence>MMAGLLSTQCNSTLSKLKHLSNNPALSVLTSTHRKYSSKDGAGSEYLHKSIVPSMHYQKSLPRLPVPKLEDTIRRYLAAQRPLLNDEQYSNTEKLAQEFQSGAGKQLHEELVALDKKNKHTSYISAPWFDMYLSARESIVLNFNPFMSFNPDPKPEYNDQLVRATNMVCSAVRFMKTLRAGLLEPEVFHLNPAKSDTDSFKKLIRWVPPSISWFGAYMVNAYPLDMSQYFRLFNSTRIPKYKRDELLTDDRGRHLLVMKRGNLYVFDALDRDGNLIKPAEVQAHLKYILEDPTQASAFPLGVLTSENRDTWTGLRQKLLDAGNGEALQLVDTALFCLCLDEEVLRDHIHISHNMLHGDGCNRWYDKSFSVILAKDGQAAINFEHSWGDGVAVLRFQNEVFKDTTEKPLVGPGSQPASVDSSSAVRRLEFKLNDELKAGITKAKENFQAAVSKLTIDAMEFKKGGKEQLKKKKLSPDAIAQLAFQMGFLRQYGQTVATYESCSTAAFKHGRTETIRPASIHTKQCAKAFVQQPGQHSVEQLLGLLNECSKYHGQLTREAAMGQGFDRHLFAMRYLANSKGMALPSLYQDPAYAAINHNILSTSTLTSPAVSLGGFAPVVPDGFGVGYGVHDEWIGCNVSSYPARDVHEFLRCVHKSLEDIFTVLDGNPIH</sequence>
<name>CPT2_DANRE</name>
<comment type="function">
    <text evidence="2">Involved in the intramitochondrial synthesis of acylcarnitines from accumulated acyl-CoA metabolites. Reconverts acylcarnitines back into the respective acyl-CoA esters that can then undergo beta-oxidation, an essential step for the mitochondrial uptake of long-chain fatty acids and their subsequent beta-oxidation in the mitochondrion. Active with medium (C8-C12) and long-chain (C14-C18) acyl-CoA esters.</text>
</comment>
<comment type="catalytic activity">
    <reaction evidence="2">
        <text>(R)-carnitine + hexadecanoyl-CoA = O-hexadecanoyl-(R)-carnitine + CoA</text>
        <dbReference type="Rhea" id="RHEA:12661"/>
        <dbReference type="ChEBI" id="CHEBI:16347"/>
        <dbReference type="ChEBI" id="CHEBI:17490"/>
        <dbReference type="ChEBI" id="CHEBI:57287"/>
        <dbReference type="ChEBI" id="CHEBI:57379"/>
        <dbReference type="EC" id="2.3.1.21"/>
    </reaction>
    <physiologicalReaction direction="right-to-left" evidence="2">
        <dbReference type="Rhea" id="RHEA:12663"/>
    </physiologicalReaction>
</comment>
<comment type="catalytic activity">
    <reaction evidence="2">
        <text>octanoyl-CoA + (R)-carnitine = O-octanoyl-(R)-carnitine + CoA</text>
        <dbReference type="Rhea" id="RHEA:17177"/>
        <dbReference type="ChEBI" id="CHEBI:16347"/>
        <dbReference type="ChEBI" id="CHEBI:18102"/>
        <dbReference type="ChEBI" id="CHEBI:57287"/>
        <dbReference type="ChEBI" id="CHEBI:57386"/>
    </reaction>
</comment>
<comment type="catalytic activity">
    <reaction evidence="2">
        <text>decanoyl-CoA + (R)-carnitine = O-decanoyl-(R)-carnitine + CoA</text>
        <dbReference type="Rhea" id="RHEA:44828"/>
        <dbReference type="ChEBI" id="CHEBI:16347"/>
        <dbReference type="ChEBI" id="CHEBI:28717"/>
        <dbReference type="ChEBI" id="CHEBI:57287"/>
        <dbReference type="ChEBI" id="CHEBI:61430"/>
    </reaction>
</comment>
<comment type="catalytic activity">
    <reaction evidence="2">
        <text>dodecanoyl-CoA + (R)-carnitine = O-dodecanoyl-R-carnitine + CoA</text>
        <dbReference type="Rhea" id="RHEA:40279"/>
        <dbReference type="ChEBI" id="CHEBI:16347"/>
        <dbReference type="ChEBI" id="CHEBI:57287"/>
        <dbReference type="ChEBI" id="CHEBI:57375"/>
        <dbReference type="ChEBI" id="CHEBI:77086"/>
    </reaction>
</comment>
<comment type="catalytic activity">
    <reaction evidence="2">
        <text>tetradecanoyl-CoA + (R)-carnitine = O-tetradecanoyl-(R)-carnitine + CoA</text>
        <dbReference type="Rhea" id="RHEA:44832"/>
        <dbReference type="ChEBI" id="CHEBI:16347"/>
        <dbReference type="ChEBI" id="CHEBI:57287"/>
        <dbReference type="ChEBI" id="CHEBI:57385"/>
        <dbReference type="ChEBI" id="CHEBI:84634"/>
    </reaction>
</comment>
<comment type="catalytic activity">
    <reaction evidence="2">
        <text>(R)-carnitine + octadecanoyl-CoA = O-octadecanoyl-(R)-carnitine + CoA</text>
        <dbReference type="Rhea" id="RHEA:44840"/>
        <dbReference type="ChEBI" id="CHEBI:16347"/>
        <dbReference type="ChEBI" id="CHEBI:57287"/>
        <dbReference type="ChEBI" id="CHEBI:57394"/>
        <dbReference type="ChEBI" id="CHEBI:84644"/>
    </reaction>
</comment>
<comment type="catalytic activity">
    <reaction evidence="2">
        <text>eicosanoyl-CoA + (R)-carnitine = O-eicosanoyl-(R)-carnitine + CoA</text>
        <dbReference type="Rhea" id="RHEA:44844"/>
        <dbReference type="ChEBI" id="CHEBI:16347"/>
        <dbReference type="ChEBI" id="CHEBI:57287"/>
        <dbReference type="ChEBI" id="CHEBI:57380"/>
        <dbReference type="ChEBI" id="CHEBI:84645"/>
    </reaction>
</comment>
<comment type="catalytic activity">
    <reaction evidence="2">
        <text>(9Z)-tetradecenoyl-CoA + (R)-carnitine = O-(9Z)-tetradecenoyl-(R)-carnitine + CoA</text>
        <dbReference type="Rhea" id="RHEA:44848"/>
        <dbReference type="ChEBI" id="CHEBI:16347"/>
        <dbReference type="ChEBI" id="CHEBI:57287"/>
        <dbReference type="ChEBI" id="CHEBI:65060"/>
        <dbReference type="ChEBI" id="CHEBI:84647"/>
    </reaction>
</comment>
<comment type="catalytic activity">
    <reaction evidence="2">
        <text>(5Z)-tetradecenoyl-CoA + (R)-carnitine = O-(5Z)-tetradecenoyl-(R)-carnitine + CoA</text>
        <dbReference type="Rhea" id="RHEA:44852"/>
        <dbReference type="ChEBI" id="CHEBI:16347"/>
        <dbReference type="ChEBI" id="CHEBI:57287"/>
        <dbReference type="ChEBI" id="CHEBI:84649"/>
        <dbReference type="ChEBI" id="CHEBI:84650"/>
    </reaction>
</comment>
<comment type="catalytic activity">
    <reaction evidence="2">
        <text>(R)-carnitine + (9Z)-octadecenoyl-CoA = O-(9Z)-octadecenoyl-(R)-carnitine + CoA</text>
        <dbReference type="Rhea" id="RHEA:44856"/>
        <dbReference type="ChEBI" id="CHEBI:16347"/>
        <dbReference type="ChEBI" id="CHEBI:57287"/>
        <dbReference type="ChEBI" id="CHEBI:57387"/>
        <dbReference type="ChEBI" id="CHEBI:84651"/>
    </reaction>
</comment>
<comment type="catalytic activity">
    <reaction evidence="2">
        <text>4,8-dimethylnonanoyl-CoA + (R)-carnitine = O-4,8-dimethylnonanoyl-(R)-carnitine + CoA</text>
        <dbReference type="Rhea" id="RHEA:44860"/>
        <dbReference type="ChEBI" id="CHEBI:16347"/>
        <dbReference type="ChEBI" id="CHEBI:57287"/>
        <dbReference type="ChEBI" id="CHEBI:77061"/>
        <dbReference type="ChEBI" id="CHEBI:84654"/>
    </reaction>
</comment>
<comment type="pathway">
    <text evidence="2">Lipid metabolism; fatty acid beta-oxidation.</text>
</comment>
<comment type="subcellular location">
    <subcellularLocation>
        <location evidence="1">Mitochondrion inner membrane</location>
        <topology evidence="1">Peripheral membrane protein</topology>
        <orientation evidence="1">Matrix side</orientation>
    </subcellularLocation>
</comment>
<comment type="similarity">
    <text evidence="4">Belongs to the carnitine/choline acetyltransferase family.</text>
</comment>
<comment type="caution">
    <text evidence="4">It is uncertain whether Met-1 or Met-2 is the initiator.</text>
</comment>
<comment type="sequence caution" evidence="4">
    <conflict type="erroneous initiation">
        <sequence resource="EMBL-CDS" id="AAH85392"/>
    </conflict>
    <text>Truncated N-terminus.</text>
</comment>
<reference key="1">
    <citation type="journal article" date="2013" name="Nature">
        <title>The zebrafish reference genome sequence and its relationship to the human genome.</title>
        <authorList>
            <person name="Howe K."/>
            <person name="Clark M.D."/>
            <person name="Torroja C.F."/>
            <person name="Torrance J."/>
            <person name="Berthelot C."/>
            <person name="Muffato M."/>
            <person name="Collins J.E."/>
            <person name="Humphray S."/>
            <person name="McLaren K."/>
            <person name="Matthews L."/>
            <person name="McLaren S."/>
            <person name="Sealy I."/>
            <person name="Caccamo M."/>
            <person name="Churcher C."/>
            <person name="Scott C."/>
            <person name="Barrett J.C."/>
            <person name="Koch R."/>
            <person name="Rauch G.J."/>
            <person name="White S."/>
            <person name="Chow W."/>
            <person name="Kilian B."/>
            <person name="Quintais L.T."/>
            <person name="Guerra-Assuncao J.A."/>
            <person name="Zhou Y."/>
            <person name="Gu Y."/>
            <person name="Yen J."/>
            <person name="Vogel J.H."/>
            <person name="Eyre T."/>
            <person name="Redmond S."/>
            <person name="Banerjee R."/>
            <person name="Chi J."/>
            <person name="Fu B."/>
            <person name="Langley E."/>
            <person name="Maguire S.F."/>
            <person name="Laird G.K."/>
            <person name="Lloyd D."/>
            <person name="Kenyon E."/>
            <person name="Donaldson S."/>
            <person name="Sehra H."/>
            <person name="Almeida-King J."/>
            <person name="Loveland J."/>
            <person name="Trevanion S."/>
            <person name="Jones M."/>
            <person name="Quail M."/>
            <person name="Willey D."/>
            <person name="Hunt A."/>
            <person name="Burton J."/>
            <person name="Sims S."/>
            <person name="McLay K."/>
            <person name="Plumb B."/>
            <person name="Davis J."/>
            <person name="Clee C."/>
            <person name="Oliver K."/>
            <person name="Clark R."/>
            <person name="Riddle C."/>
            <person name="Elliot D."/>
            <person name="Threadgold G."/>
            <person name="Harden G."/>
            <person name="Ware D."/>
            <person name="Begum S."/>
            <person name="Mortimore B."/>
            <person name="Kerry G."/>
            <person name="Heath P."/>
            <person name="Phillimore B."/>
            <person name="Tracey A."/>
            <person name="Corby N."/>
            <person name="Dunn M."/>
            <person name="Johnson C."/>
            <person name="Wood J."/>
            <person name="Clark S."/>
            <person name="Pelan S."/>
            <person name="Griffiths G."/>
            <person name="Smith M."/>
            <person name="Glithero R."/>
            <person name="Howden P."/>
            <person name="Barker N."/>
            <person name="Lloyd C."/>
            <person name="Stevens C."/>
            <person name="Harley J."/>
            <person name="Holt K."/>
            <person name="Panagiotidis G."/>
            <person name="Lovell J."/>
            <person name="Beasley H."/>
            <person name="Henderson C."/>
            <person name="Gordon D."/>
            <person name="Auger K."/>
            <person name="Wright D."/>
            <person name="Collins J."/>
            <person name="Raisen C."/>
            <person name="Dyer L."/>
            <person name="Leung K."/>
            <person name="Robertson L."/>
            <person name="Ambridge K."/>
            <person name="Leongamornlert D."/>
            <person name="McGuire S."/>
            <person name="Gilderthorp R."/>
            <person name="Griffiths C."/>
            <person name="Manthravadi D."/>
            <person name="Nichol S."/>
            <person name="Barker G."/>
            <person name="Whitehead S."/>
            <person name="Kay M."/>
            <person name="Brown J."/>
            <person name="Murnane C."/>
            <person name="Gray E."/>
            <person name="Humphries M."/>
            <person name="Sycamore N."/>
            <person name="Barker D."/>
            <person name="Saunders D."/>
            <person name="Wallis J."/>
            <person name="Babbage A."/>
            <person name="Hammond S."/>
            <person name="Mashreghi-Mohammadi M."/>
            <person name="Barr L."/>
            <person name="Martin S."/>
            <person name="Wray P."/>
            <person name="Ellington A."/>
            <person name="Matthews N."/>
            <person name="Ellwood M."/>
            <person name="Woodmansey R."/>
            <person name="Clark G."/>
            <person name="Cooper J."/>
            <person name="Tromans A."/>
            <person name="Grafham D."/>
            <person name="Skuce C."/>
            <person name="Pandian R."/>
            <person name="Andrews R."/>
            <person name="Harrison E."/>
            <person name="Kimberley A."/>
            <person name="Garnett J."/>
            <person name="Fosker N."/>
            <person name="Hall R."/>
            <person name="Garner P."/>
            <person name="Kelly D."/>
            <person name="Bird C."/>
            <person name="Palmer S."/>
            <person name="Gehring I."/>
            <person name="Berger A."/>
            <person name="Dooley C.M."/>
            <person name="Ersan-Urun Z."/>
            <person name="Eser C."/>
            <person name="Geiger H."/>
            <person name="Geisler M."/>
            <person name="Karotki L."/>
            <person name="Kirn A."/>
            <person name="Konantz J."/>
            <person name="Konantz M."/>
            <person name="Oberlander M."/>
            <person name="Rudolph-Geiger S."/>
            <person name="Teucke M."/>
            <person name="Lanz C."/>
            <person name="Raddatz G."/>
            <person name="Osoegawa K."/>
            <person name="Zhu B."/>
            <person name="Rapp A."/>
            <person name="Widaa S."/>
            <person name="Langford C."/>
            <person name="Yang F."/>
            <person name="Schuster S.C."/>
            <person name="Carter N.P."/>
            <person name="Harrow J."/>
            <person name="Ning Z."/>
            <person name="Herrero J."/>
            <person name="Searle S.M."/>
            <person name="Enright A."/>
            <person name="Geisler R."/>
            <person name="Plasterk R.H."/>
            <person name="Lee C."/>
            <person name="Westerfield M."/>
            <person name="de Jong P.J."/>
            <person name="Zon L.I."/>
            <person name="Postlethwait J.H."/>
            <person name="Nusslein-Volhard C."/>
            <person name="Hubbard T.J."/>
            <person name="Roest Crollius H."/>
            <person name="Rogers J."/>
            <person name="Stemple D.L."/>
        </authorList>
    </citation>
    <scope>NUCLEOTIDE SEQUENCE [LARGE SCALE GENOMIC DNA]</scope>
    <source>
        <strain>Tuebingen</strain>
    </source>
</reference>
<reference key="2">
    <citation type="submission" date="2004-11" db="EMBL/GenBank/DDBJ databases">
        <authorList>
            <consortium name="NIH - Zebrafish Gene Collection (ZGC) project"/>
        </authorList>
    </citation>
    <scope>NUCLEOTIDE SEQUENCE [LARGE SCALE MRNA]</scope>
    <source>
        <tissue>Embryo</tissue>
    </source>
</reference>
<dbReference type="EC" id="2.3.1.21"/>
<dbReference type="EMBL" id="BX927144">
    <property type="protein sequence ID" value="CAQ13312.1"/>
    <property type="molecule type" value="Genomic_DNA"/>
</dbReference>
<dbReference type="EMBL" id="BC085392">
    <property type="protein sequence ID" value="AAH85392.1"/>
    <property type="status" value="ALT_INIT"/>
    <property type="molecule type" value="mRNA"/>
</dbReference>
<dbReference type="RefSeq" id="NP_001007448.2">
    <property type="nucleotide sequence ID" value="NM_001007447.2"/>
</dbReference>
<dbReference type="RefSeq" id="XP_068078938.1">
    <property type="nucleotide sequence ID" value="XM_068222837.1"/>
</dbReference>
<dbReference type="SMR" id="Q5U3U3"/>
<dbReference type="FunCoup" id="Q5U3U3">
    <property type="interactions" value="2666"/>
</dbReference>
<dbReference type="STRING" id="7955.ENSDARP00000122226"/>
<dbReference type="PaxDb" id="7955-ENSDARP00000122226"/>
<dbReference type="PeptideAtlas" id="Q5U3U3"/>
<dbReference type="Ensembl" id="ENSDART00000135938">
    <property type="protein sequence ID" value="ENSDARP00000122226"/>
    <property type="gene ID" value="ENSDARG00000038618"/>
</dbReference>
<dbReference type="GeneID" id="100005717"/>
<dbReference type="KEGG" id="dre:100005717"/>
<dbReference type="AGR" id="ZFIN:ZDB-GENE-030131-6719"/>
<dbReference type="CTD" id="1376"/>
<dbReference type="ZFIN" id="ZDB-GENE-030131-6719">
    <property type="gene designation" value="cpt2"/>
</dbReference>
<dbReference type="eggNOG" id="KOG3719">
    <property type="taxonomic scope" value="Eukaryota"/>
</dbReference>
<dbReference type="HOGENOM" id="CLU_013513_4_2_1"/>
<dbReference type="InParanoid" id="Q5U3U3"/>
<dbReference type="OMA" id="HILVMRR"/>
<dbReference type="OrthoDB" id="240216at2759"/>
<dbReference type="PhylomeDB" id="Q5U3U3"/>
<dbReference type="TreeFam" id="TF315202"/>
<dbReference type="Reactome" id="R-DRE-200425">
    <property type="pathway name" value="Carnitine shuttle"/>
</dbReference>
<dbReference type="UniPathway" id="UPA00659"/>
<dbReference type="PRO" id="PR:Q5U3U3"/>
<dbReference type="Proteomes" id="UP000000437">
    <property type="component" value="Alternate scaffold 8"/>
</dbReference>
<dbReference type="Proteomes" id="UP000000437">
    <property type="component" value="Chromosome 8"/>
</dbReference>
<dbReference type="Bgee" id="ENSDARG00000038618">
    <property type="expression patterns" value="Expressed in intestine and 20 other cell types or tissues"/>
</dbReference>
<dbReference type="ExpressionAtlas" id="Q5U3U3">
    <property type="expression patterns" value="baseline and differential"/>
</dbReference>
<dbReference type="GO" id="GO:0005743">
    <property type="term" value="C:mitochondrial inner membrane"/>
    <property type="evidence" value="ECO:0007669"/>
    <property type="project" value="UniProtKB-SubCell"/>
</dbReference>
<dbReference type="GO" id="GO:0005739">
    <property type="term" value="C:mitochondrion"/>
    <property type="evidence" value="ECO:0000318"/>
    <property type="project" value="GO_Central"/>
</dbReference>
<dbReference type="GO" id="GO:0008458">
    <property type="term" value="F:carnitine O-octanoyltransferase activity"/>
    <property type="evidence" value="ECO:0007669"/>
    <property type="project" value="RHEA"/>
</dbReference>
<dbReference type="GO" id="GO:0004095">
    <property type="term" value="F:carnitine O-palmitoyltransferase activity"/>
    <property type="evidence" value="ECO:0000318"/>
    <property type="project" value="GO_Central"/>
</dbReference>
<dbReference type="GO" id="GO:0006635">
    <property type="term" value="P:fatty acid beta-oxidation"/>
    <property type="evidence" value="ECO:0000318"/>
    <property type="project" value="GO_Central"/>
</dbReference>
<dbReference type="FunFam" id="1.20.1280.180:FF:000001">
    <property type="entry name" value="Carnitine O-palmitoyltransferase 2, mitochondrial"/>
    <property type="match status" value="1"/>
</dbReference>
<dbReference type="FunFam" id="1.10.275.20:FF:000001">
    <property type="entry name" value="carnitine O-palmitoyltransferase 2, mitochondrial"/>
    <property type="match status" value="1"/>
</dbReference>
<dbReference type="FunFam" id="3.30.559.10:FF:000010">
    <property type="entry name" value="carnitine O-palmitoyltransferase 2, mitochondrial"/>
    <property type="match status" value="1"/>
</dbReference>
<dbReference type="Gene3D" id="1.20.1280.180">
    <property type="match status" value="1"/>
</dbReference>
<dbReference type="Gene3D" id="3.30.559.10">
    <property type="entry name" value="Chloramphenicol acetyltransferase-like domain"/>
    <property type="match status" value="1"/>
</dbReference>
<dbReference type="Gene3D" id="1.10.275.20">
    <property type="entry name" value="Choline/Carnitine o-acyltransferase"/>
    <property type="match status" value="1"/>
</dbReference>
<dbReference type="Gene3D" id="3.30.559.70">
    <property type="entry name" value="Choline/Carnitine o-acyltransferase, domain 2"/>
    <property type="match status" value="1"/>
</dbReference>
<dbReference type="InterPro" id="IPR000542">
    <property type="entry name" value="Carn_acyl_trans"/>
</dbReference>
<dbReference type="InterPro" id="IPR042572">
    <property type="entry name" value="Carn_acyl_trans_N"/>
</dbReference>
<dbReference type="InterPro" id="IPR023213">
    <property type="entry name" value="CAT-like_dom_sf"/>
</dbReference>
<dbReference type="InterPro" id="IPR039551">
    <property type="entry name" value="Cho/carn_acyl_trans"/>
</dbReference>
<dbReference type="InterPro" id="IPR042231">
    <property type="entry name" value="Cho/carn_acyl_trans_2"/>
</dbReference>
<dbReference type="PANTHER" id="PTHR22589">
    <property type="entry name" value="CARNITINE O-ACYLTRANSFERASE"/>
    <property type="match status" value="1"/>
</dbReference>
<dbReference type="PANTHER" id="PTHR22589:SF16">
    <property type="entry name" value="CARNITINE O-PALMITOYLTRANSFERASE 2, MITOCHONDRIAL"/>
    <property type="match status" value="1"/>
</dbReference>
<dbReference type="Pfam" id="PF00755">
    <property type="entry name" value="Carn_acyltransf"/>
    <property type="match status" value="1"/>
</dbReference>
<dbReference type="SUPFAM" id="SSF52777">
    <property type="entry name" value="CoA-dependent acyltransferases"/>
    <property type="match status" value="2"/>
</dbReference>
<dbReference type="PROSITE" id="PS00439">
    <property type="entry name" value="ACYLTRANSF_C_1"/>
    <property type="match status" value="1"/>
</dbReference>
<dbReference type="PROSITE" id="PS00440">
    <property type="entry name" value="ACYLTRANSF_C_2"/>
    <property type="match status" value="1"/>
</dbReference>